<evidence type="ECO:0000250" key="1"/>
<evidence type="ECO:0000305" key="2"/>
<reference key="1">
    <citation type="journal article" date="2007" name="Immunogenetics">
        <title>A third broad lineage of major histocompatibility complex (MHC) class I in teleost fish; MHC class II linkage and processed genes.</title>
        <authorList>
            <person name="Dijkstra J.M."/>
            <person name="Katagiri T."/>
            <person name="Hosomichi K."/>
            <person name="Yanagiya K."/>
            <person name="Inoko H."/>
            <person name="Ototake M."/>
            <person name="Aoki T."/>
            <person name="Hashimoto K."/>
            <person name="Shiina T."/>
        </authorList>
    </citation>
    <scope>NUCLEOTIDE SEQUENCE [GENOMIC DNA]</scope>
</reference>
<sequence length="240" mass="26754">MAISPSRVFAALLPTAGDIYRDENEPGMGGHTVTVQRTQNSAREVQVTGSAEVSCPADRATVSVSFKNSKESVNDVTNSISRRVEYILQTLRQHHVKGEELTVTRHIYRADDLYHMEALVMVVFSDFGQMERVCIVLLEKLDKSVCVSTPHFYHSEECLGLLRRSVCVAAVENARLKASEMSSMLGQTLGHPLLVREEEATERDGGRQGGEGVHRPSISATSRVFVTFNLRHKDRTRKKI</sequence>
<comment type="function">
    <text evidence="1">May be part of a signaling pathway that leads to NF-kappa-B activation.</text>
</comment>
<comment type="subcellular location">
    <subcellularLocation>
        <location evidence="1">Cytoplasm</location>
    </subcellularLocation>
    <subcellularLocation>
        <location evidence="1">Nucleus</location>
    </subcellularLocation>
</comment>
<comment type="similarity">
    <text evidence="2">Belongs to the IRAK1BP1 family.</text>
</comment>
<proteinExistence type="inferred from homology"/>
<protein>
    <recommendedName>
        <fullName>Interleukin-1 receptor-associated kinase 1-binding protein 1 homolog</fullName>
    </recommendedName>
</protein>
<accession>A0P9L2</accession>
<name>IKBP1_ONCMY</name>
<dbReference type="EMBL" id="AB258536">
    <property type="protein sequence ID" value="BAF37939.1"/>
    <property type="molecule type" value="Genomic_DNA"/>
</dbReference>
<dbReference type="RefSeq" id="XP_021425734.1">
    <property type="nucleotide sequence ID" value="XM_021570059.2"/>
</dbReference>
<dbReference type="SMR" id="A0P9L2"/>
<dbReference type="Ensembl" id="ENSOMYT00000019685.2">
    <property type="protein sequence ID" value="ENSOMYP00000017870.1"/>
    <property type="gene ID" value="ENSOMYG00000008762.2"/>
</dbReference>
<dbReference type="GeneID" id="110494738"/>
<dbReference type="GeneTree" id="ENSGT00390000012588"/>
<dbReference type="OrthoDB" id="6365554at2759"/>
<dbReference type="Proteomes" id="UP000694395">
    <property type="component" value="Chromosome 17"/>
</dbReference>
<dbReference type="GO" id="GO:0005737">
    <property type="term" value="C:cytoplasm"/>
    <property type="evidence" value="ECO:0007669"/>
    <property type="project" value="UniProtKB-SubCell"/>
</dbReference>
<dbReference type="GO" id="GO:0005634">
    <property type="term" value="C:nucleus"/>
    <property type="evidence" value="ECO:0007669"/>
    <property type="project" value="UniProtKB-SubCell"/>
</dbReference>
<dbReference type="GO" id="GO:0006955">
    <property type="term" value="P:immune response"/>
    <property type="evidence" value="ECO:0007669"/>
    <property type="project" value="InterPro"/>
</dbReference>
<dbReference type="GO" id="GO:0043123">
    <property type="term" value="P:positive regulation of canonical NF-kappaB signal transduction"/>
    <property type="evidence" value="ECO:0007669"/>
    <property type="project" value="InterPro"/>
</dbReference>
<dbReference type="InterPro" id="IPR030312">
    <property type="entry name" value="IRAK1BP1"/>
</dbReference>
<dbReference type="InterPro" id="IPR007497">
    <property type="entry name" value="SIMPL/DUF541"/>
</dbReference>
<dbReference type="PANTHER" id="PTHR18842">
    <property type="entry name" value="INTERLEUKIN-1 RECEPTOR-ASSOCIATED KINASE 1-BINDING PROTEIN 1"/>
    <property type="match status" value="1"/>
</dbReference>
<dbReference type="PANTHER" id="PTHR18842:SF2">
    <property type="entry name" value="INTERLEUKIN-1 RECEPTOR-ASSOCIATED KINASE 1-BINDING PROTEIN 1"/>
    <property type="match status" value="1"/>
</dbReference>
<dbReference type="Pfam" id="PF04402">
    <property type="entry name" value="SIMPL"/>
    <property type="match status" value="1"/>
</dbReference>
<organism>
    <name type="scientific">Oncorhynchus mykiss</name>
    <name type="common">Rainbow trout</name>
    <name type="synonym">Salmo gairdneri</name>
    <dbReference type="NCBI Taxonomy" id="8022"/>
    <lineage>
        <taxon>Eukaryota</taxon>
        <taxon>Metazoa</taxon>
        <taxon>Chordata</taxon>
        <taxon>Craniata</taxon>
        <taxon>Vertebrata</taxon>
        <taxon>Euteleostomi</taxon>
        <taxon>Actinopterygii</taxon>
        <taxon>Neopterygii</taxon>
        <taxon>Teleostei</taxon>
        <taxon>Protacanthopterygii</taxon>
        <taxon>Salmoniformes</taxon>
        <taxon>Salmonidae</taxon>
        <taxon>Salmoninae</taxon>
        <taxon>Oncorhynchus</taxon>
    </lineage>
</organism>
<keyword id="KW-0963">Cytoplasm</keyword>
<keyword id="KW-0539">Nucleus</keyword>
<gene>
    <name type="primary">irak1bp1</name>
</gene>
<feature type="chain" id="PRO_0000313736" description="Interleukin-1 receptor-associated kinase 1-binding protein 1 homolog">
    <location>
        <begin position="1"/>
        <end position="240"/>
    </location>
</feature>